<gene>
    <name evidence="1" type="primary">rsmG</name>
    <name type="ordered locus">OTT_0426</name>
</gene>
<name>RSMG_ORITI</name>
<feature type="chain" id="PRO_1000092642" description="Ribosomal RNA small subunit methyltransferase G">
    <location>
        <begin position="1"/>
        <end position="198"/>
    </location>
</feature>
<feature type="binding site" evidence="1">
    <location>
        <position position="74"/>
    </location>
    <ligand>
        <name>S-adenosyl-L-methionine</name>
        <dbReference type="ChEBI" id="CHEBI:59789"/>
    </ligand>
</feature>
<feature type="binding site" evidence="1">
    <location>
        <position position="79"/>
    </location>
    <ligand>
        <name>S-adenosyl-L-methionine</name>
        <dbReference type="ChEBI" id="CHEBI:59789"/>
    </ligand>
</feature>
<feature type="binding site" evidence="1">
    <location>
        <begin position="123"/>
        <end position="124"/>
    </location>
    <ligand>
        <name>S-adenosyl-L-methionine</name>
        <dbReference type="ChEBI" id="CHEBI:59789"/>
    </ligand>
</feature>
<feature type="binding site" evidence="1">
    <location>
        <position position="136"/>
    </location>
    <ligand>
        <name>S-adenosyl-L-methionine</name>
        <dbReference type="ChEBI" id="CHEBI:59789"/>
    </ligand>
</feature>
<reference key="1">
    <citation type="journal article" date="2008" name="DNA Res.">
        <title>The whole-genome sequencing of the obligate intracellular bacterium Orientia tsutsugamushi revealed massive gene amplification during reductive genome evolution.</title>
        <authorList>
            <person name="Nakayama K."/>
            <person name="Yamashita A."/>
            <person name="Kurokawa K."/>
            <person name="Morimoto T."/>
            <person name="Ogawa M."/>
            <person name="Fukuhara M."/>
            <person name="Urakami H."/>
            <person name="Ohnishi M."/>
            <person name="Uchiyama I."/>
            <person name="Ogura Y."/>
            <person name="Ooka T."/>
            <person name="Oshima K."/>
            <person name="Tamura A."/>
            <person name="Hattori M."/>
            <person name="Hayashi T."/>
        </authorList>
    </citation>
    <scope>NUCLEOTIDE SEQUENCE [LARGE SCALE GENOMIC DNA]</scope>
    <source>
        <strain>Ikeda</strain>
    </source>
</reference>
<comment type="function">
    <text evidence="1">Specifically methylates the N7 position of guanine in position 527 of 16S rRNA.</text>
</comment>
<comment type="catalytic activity">
    <reaction evidence="1">
        <text>guanosine(527) in 16S rRNA + S-adenosyl-L-methionine = N(7)-methylguanosine(527) in 16S rRNA + S-adenosyl-L-homocysteine</text>
        <dbReference type="Rhea" id="RHEA:42732"/>
        <dbReference type="Rhea" id="RHEA-COMP:10209"/>
        <dbReference type="Rhea" id="RHEA-COMP:10210"/>
        <dbReference type="ChEBI" id="CHEBI:57856"/>
        <dbReference type="ChEBI" id="CHEBI:59789"/>
        <dbReference type="ChEBI" id="CHEBI:74269"/>
        <dbReference type="ChEBI" id="CHEBI:74480"/>
        <dbReference type="EC" id="2.1.1.170"/>
    </reaction>
</comment>
<comment type="subcellular location">
    <subcellularLocation>
        <location evidence="1">Cytoplasm</location>
    </subcellularLocation>
</comment>
<comment type="similarity">
    <text evidence="1">Belongs to the methyltransferase superfamily. RNA methyltransferase RsmG family.</text>
</comment>
<keyword id="KW-0963">Cytoplasm</keyword>
<keyword id="KW-0489">Methyltransferase</keyword>
<keyword id="KW-0698">rRNA processing</keyword>
<keyword id="KW-0949">S-adenosyl-L-methionine</keyword>
<keyword id="KW-0808">Transferase</keyword>
<sequence>MLQQIYDFLNINYNVSRETFNKFKEYYSLLSKWNSTINLVSATTLQNFWQRHIFDSIQLLNYIHNKDIIVADLGSGAGFPGVVLSISGIKNVILIESDSRKAAFLLQVAQLSDQKIEIINDRIQNLKVKCDIVTVRALANLSTILSHTKQFTVKDKYLILKGKNYQHEITQALLHNKFNYRLYKSCTDDSSWILEIKI</sequence>
<proteinExistence type="inferred from homology"/>
<accession>B3CQX7</accession>
<evidence type="ECO:0000255" key="1">
    <source>
        <dbReference type="HAMAP-Rule" id="MF_00074"/>
    </source>
</evidence>
<organism>
    <name type="scientific">Orientia tsutsugamushi (strain Ikeda)</name>
    <name type="common">Rickettsia tsutsugamushi</name>
    <dbReference type="NCBI Taxonomy" id="334380"/>
    <lineage>
        <taxon>Bacteria</taxon>
        <taxon>Pseudomonadati</taxon>
        <taxon>Pseudomonadota</taxon>
        <taxon>Alphaproteobacteria</taxon>
        <taxon>Rickettsiales</taxon>
        <taxon>Rickettsiaceae</taxon>
        <taxon>Rickettsieae</taxon>
        <taxon>Orientia</taxon>
    </lineage>
</organism>
<protein>
    <recommendedName>
        <fullName evidence="1">Ribosomal RNA small subunit methyltransferase G</fullName>
        <ecNumber evidence="1">2.1.1.170</ecNumber>
    </recommendedName>
    <alternativeName>
        <fullName evidence="1">16S rRNA 7-methylguanosine methyltransferase</fullName>
        <shortName evidence="1">16S rRNA m7G methyltransferase</shortName>
    </alternativeName>
</protein>
<dbReference type="EC" id="2.1.1.170" evidence="1"/>
<dbReference type="EMBL" id="AP008981">
    <property type="protein sequence ID" value="BAG39884.1"/>
    <property type="molecule type" value="Genomic_DNA"/>
</dbReference>
<dbReference type="SMR" id="B3CQX7"/>
<dbReference type="KEGG" id="ott:OTT_0426"/>
<dbReference type="HOGENOM" id="CLU_065341_1_1_5"/>
<dbReference type="OrthoDB" id="9808773at2"/>
<dbReference type="Proteomes" id="UP000001033">
    <property type="component" value="Chromosome"/>
</dbReference>
<dbReference type="GO" id="GO:0005829">
    <property type="term" value="C:cytosol"/>
    <property type="evidence" value="ECO:0007669"/>
    <property type="project" value="TreeGrafter"/>
</dbReference>
<dbReference type="GO" id="GO:0070043">
    <property type="term" value="F:rRNA (guanine-N7-)-methyltransferase activity"/>
    <property type="evidence" value="ECO:0007669"/>
    <property type="project" value="UniProtKB-UniRule"/>
</dbReference>
<dbReference type="Gene3D" id="3.40.50.150">
    <property type="entry name" value="Vaccinia Virus protein VP39"/>
    <property type="match status" value="1"/>
</dbReference>
<dbReference type="HAMAP" id="MF_00074">
    <property type="entry name" value="16SrRNA_methyltr_G"/>
    <property type="match status" value="1"/>
</dbReference>
<dbReference type="InterPro" id="IPR003682">
    <property type="entry name" value="rRNA_ssu_MeTfrase_G"/>
</dbReference>
<dbReference type="InterPro" id="IPR029063">
    <property type="entry name" value="SAM-dependent_MTases_sf"/>
</dbReference>
<dbReference type="NCBIfam" id="TIGR00138">
    <property type="entry name" value="rsmG_gidB"/>
    <property type="match status" value="1"/>
</dbReference>
<dbReference type="PANTHER" id="PTHR31760">
    <property type="entry name" value="S-ADENOSYL-L-METHIONINE-DEPENDENT METHYLTRANSFERASES SUPERFAMILY PROTEIN"/>
    <property type="match status" value="1"/>
</dbReference>
<dbReference type="PANTHER" id="PTHR31760:SF0">
    <property type="entry name" value="S-ADENOSYL-L-METHIONINE-DEPENDENT METHYLTRANSFERASES SUPERFAMILY PROTEIN"/>
    <property type="match status" value="1"/>
</dbReference>
<dbReference type="Pfam" id="PF02527">
    <property type="entry name" value="GidB"/>
    <property type="match status" value="1"/>
</dbReference>
<dbReference type="PIRSF" id="PIRSF003078">
    <property type="entry name" value="GidB"/>
    <property type="match status" value="1"/>
</dbReference>
<dbReference type="SUPFAM" id="SSF53335">
    <property type="entry name" value="S-adenosyl-L-methionine-dependent methyltransferases"/>
    <property type="match status" value="1"/>
</dbReference>